<dbReference type="EC" id="3.1.15.-" evidence="1"/>
<dbReference type="EMBL" id="CP000238">
    <property type="protein sequence ID" value="ABF14034.1"/>
    <property type="molecule type" value="Genomic_DNA"/>
</dbReference>
<dbReference type="RefSeq" id="WP_011520747.1">
    <property type="nucleotide sequence ID" value="NC_007984.1"/>
</dbReference>
<dbReference type="SMR" id="Q1LSQ0"/>
<dbReference type="STRING" id="374463.BCI_0586"/>
<dbReference type="KEGG" id="bci:BCI_0586"/>
<dbReference type="HOGENOM" id="CLU_064761_2_0_6"/>
<dbReference type="OrthoDB" id="9801329at2"/>
<dbReference type="Proteomes" id="UP000002427">
    <property type="component" value="Chromosome"/>
</dbReference>
<dbReference type="GO" id="GO:0005737">
    <property type="term" value="C:cytoplasm"/>
    <property type="evidence" value="ECO:0007669"/>
    <property type="project" value="UniProtKB-SubCell"/>
</dbReference>
<dbReference type="GO" id="GO:0000175">
    <property type="term" value="F:3'-5'-RNA exonuclease activity"/>
    <property type="evidence" value="ECO:0007669"/>
    <property type="project" value="InterPro"/>
</dbReference>
<dbReference type="GO" id="GO:0003676">
    <property type="term" value="F:nucleic acid binding"/>
    <property type="evidence" value="ECO:0007669"/>
    <property type="project" value="InterPro"/>
</dbReference>
<dbReference type="GO" id="GO:0006259">
    <property type="term" value="P:DNA metabolic process"/>
    <property type="evidence" value="ECO:0007669"/>
    <property type="project" value="UniProtKB-ARBA"/>
</dbReference>
<dbReference type="CDD" id="cd06135">
    <property type="entry name" value="Orn"/>
    <property type="match status" value="1"/>
</dbReference>
<dbReference type="FunFam" id="3.30.420.10:FF:000003">
    <property type="entry name" value="Oligoribonuclease"/>
    <property type="match status" value="1"/>
</dbReference>
<dbReference type="Gene3D" id="3.30.420.10">
    <property type="entry name" value="Ribonuclease H-like superfamily/Ribonuclease H"/>
    <property type="match status" value="1"/>
</dbReference>
<dbReference type="HAMAP" id="MF_00045">
    <property type="entry name" value="Oligoribonuclease"/>
    <property type="match status" value="1"/>
</dbReference>
<dbReference type="InterPro" id="IPR013520">
    <property type="entry name" value="Exonuclease_RNaseT/DNA_pol3"/>
</dbReference>
<dbReference type="InterPro" id="IPR022894">
    <property type="entry name" value="Oligoribonuclease"/>
</dbReference>
<dbReference type="InterPro" id="IPR012337">
    <property type="entry name" value="RNaseH-like_sf"/>
</dbReference>
<dbReference type="InterPro" id="IPR036397">
    <property type="entry name" value="RNaseH_sf"/>
</dbReference>
<dbReference type="NCBIfam" id="NF003765">
    <property type="entry name" value="PRK05359.1"/>
    <property type="match status" value="1"/>
</dbReference>
<dbReference type="PANTHER" id="PTHR11046">
    <property type="entry name" value="OLIGORIBONUCLEASE, MITOCHONDRIAL"/>
    <property type="match status" value="1"/>
</dbReference>
<dbReference type="PANTHER" id="PTHR11046:SF0">
    <property type="entry name" value="OLIGORIBONUCLEASE, MITOCHONDRIAL"/>
    <property type="match status" value="1"/>
</dbReference>
<dbReference type="Pfam" id="PF00929">
    <property type="entry name" value="RNase_T"/>
    <property type="match status" value="1"/>
</dbReference>
<dbReference type="SMART" id="SM00479">
    <property type="entry name" value="EXOIII"/>
    <property type="match status" value="1"/>
</dbReference>
<dbReference type="SUPFAM" id="SSF53098">
    <property type="entry name" value="Ribonuclease H-like"/>
    <property type="match status" value="1"/>
</dbReference>
<reference key="1">
    <citation type="journal article" date="2006" name="PLoS Biol.">
        <title>Metabolic complementarity and genomics of the dual bacterial symbiosis of sharpshooters.</title>
        <authorList>
            <person name="Wu D."/>
            <person name="Daugherty S.C."/>
            <person name="Van Aken S.E."/>
            <person name="Pai G.H."/>
            <person name="Watkins K.L."/>
            <person name="Khouri H."/>
            <person name="Tallon L.J."/>
            <person name="Zaborsky J.M."/>
            <person name="Dunbar H.E."/>
            <person name="Tran P.L."/>
            <person name="Moran N.A."/>
            <person name="Eisen J.A."/>
        </authorList>
    </citation>
    <scope>NUCLEOTIDE SEQUENCE [LARGE SCALE GENOMIC DNA]</scope>
</reference>
<comment type="function">
    <text evidence="1">3'-to-5' exoribonuclease specific for small oligoribonucleotides.</text>
</comment>
<comment type="subcellular location">
    <subcellularLocation>
        <location evidence="1">Cytoplasm</location>
    </subcellularLocation>
</comment>
<comment type="similarity">
    <text evidence="1">Belongs to the oligoribonuclease family.</text>
</comment>
<accession>Q1LSQ0</accession>
<name>ORN_BAUCH</name>
<evidence type="ECO:0000255" key="1">
    <source>
        <dbReference type="HAMAP-Rule" id="MF_00045"/>
    </source>
</evidence>
<feature type="chain" id="PRO_1000071090" description="Oligoribonuclease">
    <location>
        <begin position="1"/>
        <end position="184"/>
    </location>
</feature>
<feature type="domain" description="Exonuclease" evidence="1">
    <location>
        <begin position="7"/>
        <end position="170"/>
    </location>
</feature>
<feature type="active site" evidence="1">
    <location>
        <position position="128"/>
    </location>
</feature>
<protein>
    <recommendedName>
        <fullName evidence="1">Oligoribonuclease</fullName>
        <ecNumber evidence="1">3.1.15.-</ecNumber>
    </recommendedName>
</protein>
<sequence>MISLHNLIWIDLEMTGLNPEQDRILEIATLITDANLNIIAEGPVLAIHQSEEQLKLMNTWNIRIHTANGLIEKVRKSTLNEETAAAQTIAFLQEWVPAGKSPICGNSISQDRRFLYRYMPILESYFHYRCLDVSTLQELARRWKPKIMAGIKKKNSHKALDDIRESVAELVYYRAHFLLLSSNI</sequence>
<organism>
    <name type="scientific">Baumannia cicadellinicola subsp. Homalodisca coagulata</name>
    <dbReference type="NCBI Taxonomy" id="374463"/>
    <lineage>
        <taxon>Bacteria</taxon>
        <taxon>Pseudomonadati</taxon>
        <taxon>Pseudomonadota</taxon>
        <taxon>Gammaproteobacteria</taxon>
        <taxon>Candidatus Palibaumannia</taxon>
    </lineage>
</organism>
<proteinExistence type="inferred from homology"/>
<gene>
    <name evidence="1" type="primary">orn</name>
    <name type="ordered locus">BCI_0586</name>
</gene>
<keyword id="KW-0963">Cytoplasm</keyword>
<keyword id="KW-0269">Exonuclease</keyword>
<keyword id="KW-0378">Hydrolase</keyword>
<keyword id="KW-0540">Nuclease</keyword>
<keyword id="KW-1185">Reference proteome</keyword>